<sequence>MDAPRINKWLKPLSALYGVGVRLRNYLFDKNVLISNSFDIPIVCVGNITIGGTGKTPHVEYLIRLLHPRYRVAVVSRGYKRKTKGMIVATEGSTAWDIGDEPRQIKRKYPDLTVIVDADRSRAIGYLCDLAEEQRPQLIVLDDGFQHRKVKADLNIVLTDYNRILTKDYLLPAGRLREPAGSIQRADMVILTKCPDDLAPIDLRAAKRDLALYPHQKLFFSKFLYGQGLKPLFSDQSPSAEVRSALAIAGIASPKLFFREIRTRFPSGTDRIYPDHHEFTDREICLLIQDWHELHRKDANAIVVCTEKDAMRLALRQSSFPQEMQERFYYLPVEVKLMFDQEKVFVDRLLGVIQHKK</sequence>
<name>LPXK_PORGI</name>
<accession>Q7MWH4</accession>
<proteinExistence type="inferred from homology"/>
<protein>
    <recommendedName>
        <fullName evidence="1">Tetraacyldisaccharide 4'-kinase</fullName>
        <ecNumber evidence="1">2.7.1.130</ecNumber>
    </recommendedName>
    <alternativeName>
        <fullName evidence="1">Lipid A 4'-kinase</fullName>
    </alternativeName>
</protein>
<comment type="function">
    <text evidence="1">Transfers the gamma-phosphate of ATP to the 4'-position of a tetraacyldisaccharide 1-phosphate intermediate (termed DS-1-P) to form tetraacyldisaccharide 1,4'-bis-phosphate (lipid IVA).</text>
</comment>
<comment type="catalytic activity">
    <reaction evidence="1">
        <text>a lipid A disaccharide + ATP = a lipid IVA + ADP + H(+)</text>
        <dbReference type="Rhea" id="RHEA:67840"/>
        <dbReference type="ChEBI" id="CHEBI:15378"/>
        <dbReference type="ChEBI" id="CHEBI:30616"/>
        <dbReference type="ChEBI" id="CHEBI:176343"/>
        <dbReference type="ChEBI" id="CHEBI:176425"/>
        <dbReference type="ChEBI" id="CHEBI:456216"/>
        <dbReference type="EC" id="2.7.1.130"/>
    </reaction>
</comment>
<comment type="pathway">
    <text evidence="1">Glycolipid biosynthesis; lipid IV(A) biosynthesis; lipid IV(A) from (3R)-3-hydroxytetradecanoyl-[acyl-carrier-protein] and UDP-N-acetyl-alpha-D-glucosamine: step 6/6.</text>
</comment>
<comment type="similarity">
    <text evidence="1">Belongs to the LpxK family.</text>
</comment>
<gene>
    <name evidence="1" type="primary">lpxK</name>
    <name type="ordered locus">PG_0638</name>
</gene>
<feature type="chain" id="PRO_1000080470" description="Tetraacyldisaccharide 4'-kinase">
    <location>
        <begin position="1"/>
        <end position="357"/>
    </location>
</feature>
<feature type="binding site" evidence="1">
    <location>
        <begin position="49"/>
        <end position="56"/>
    </location>
    <ligand>
        <name>ATP</name>
        <dbReference type="ChEBI" id="CHEBI:30616"/>
    </ligand>
</feature>
<evidence type="ECO:0000255" key="1">
    <source>
        <dbReference type="HAMAP-Rule" id="MF_00409"/>
    </source>
</evidence>
<keyword id="KW-0067">ATP-binding</keyword>
<keyword id="KW-0418">Kinase</keyword>
<keyword id="KW-0441">Lipid A biosynthesis</keyword>
<keyword id="KW-0444">Lipid biosynthesis</keyword>
<keyword id="KW-0443">Lipid metabolism</keyword>
<keyword id="KW-0547">Nucleotide-binding</keyword>
<keyword id="KW-1185">Reference proteome</keyword>
<keyword id="KW-0808">Transferase</keyword>
<reference key="1">
    <citation type="journal article" date="2003" name="J. Bacteriol.">
        <title>Complete genome sequence of the oral pathogenic bacterium Porphyromonas gingivalis strain W83.</title>
        <authorList>
            <person name="Nelson K.E."/>
            <person name="Fleischmann R.D."/>
            <person name="DeBoy R.T."/>
            <person name="Paulsen I.T."/>
            <person name="Fouts D.E."/>
            <person name="Eisen J.A."/>
            <person name="Daugherty S.C."/>
            <person name="Dodson R.J."/>
            <person name="Durkin A.S."/>
            <person name="Gwinn M.L."/>
            <person name="Haft D.H."/>
            <person name="Kolonay J.F."/>
            <person name="Nelson W.C."/>
            <person name="Mason T.M."/>
            <person name="Tallon L."/>
            <person name="Gray J."/>
            <person name="Granger D."/>
            <person name="Tettelin H."/>
            <person name="Dong H."/>
            <person name="Galvin J.L."/>
            <person name="Duncan M.J."/>
            <person name="Dewhirst F.E."/>
            <person name="Fraser C.M."/>
        </authorList>
    </citation>
    <scope>NUCLEOTIDE SEQUENCE [LARGE SCALE GENOMIC DNA]</scope>
    <source>
        <strain>ATCC BAA-308 / W83</strain>
    </source>
</reference>
<dbReference type="EC" id="2.7.1.130" evidence="1"/>
<dbReference type="EMBL" id="AE015924">
    <property type="protein sequence ID" value="AAQ65822.1"/>
    <property type="molecule type" value="Genomic_DNA"/>
</dbReference>
<dbReference type="RefSeq" id="WP_005874531.1">
    <property type="nucleotide sequence ID" value="NC_002950.2"/>
</dbReference>
<dbReference type="SMR" id="Q7MWH4"/>
<dbReference type="STRING" id="242619.PG_0638"/>
<dbReference type="EnsemblBacteria" id="AAQ65822">
    <property type="protein sequence ID" value="AAQ65822"/>
    <property type="gene ID" value="PG_0638"/>
</dbReference>
<dbReference type="KEGG" id="pgi:PG_0638"/>
<dbReference type="PATRIC" id="fig|242619.8.peg.584"/>
<dbReference type="eggNOG" id="COG1663">
    <property type="taxonomic scope" value="Bacteria"/>
</dbReference>
<dbReference type="HOGENOM" id="CLU_038816_6_0_10"/>
<dbReference type="BioCyc" id="MetaCyc:HMPREF1322_RS06260-MONOMER"/>
<dbReference type="BioCyc" id="PGIN242619:G1G02-593-MONOMER"/>
<dbReference type="UniPathway" id="UPA00359">
    <property type="reaction ID" value="UER00482"/>
</dbReference>
<dbReference type="Proteomes" id="UP000000588">
    <property type="component" value="Chromosome"/>
</dbReference>
<dbReference type="GO" id="GO:0005886">
    <property type="term" value="C:plasma membrane"/>
    <property type="evidence" value="ECO:0007669"/>
    <property type="project" value="TreeGrafter"/>
</dbReference>
<dbReference type="GO" id="GO:0005524">
    <property type="term" value="F:ATP binding"/>
    <property type="evidence" value="ECO:0007669"/>
    <property type="project" value="UniProtKB-UniRule"/>
</dbReference>
<dbReference type="GO" id="GO:0009029">
    <property type="term" value="F:tetraacyldisaccharide 4'-kinase activity"/>
    <property type="evidence" value="ECO:0007669"/>
    <property type="project" value="UniProtKB-UniRule"/>
</dbReference>
<dbReference type="GO" id="GO:0009245">
    <property type="term" value="P:lipid A biosynthetic process"/>
    <property type="evidence" value="ECO:0007669"/>
    <property type="project" value="UniProtKB-UniRule"/>
</dbReference>
<dbReference type="GO" id="GO:0009244">
    <property type="term" value="P:lipopolysaccharide core region biosynthetic process"/>
    <property type="evidence" value="ECO:0007669"/>
    <property type="project" value="TreeGrafter"/>
</dbReference>
<dbReference type="HAMAP" id="MF_00409">
    <property type="entry name" value="LpxK"/>
    <property type="match status" value="1"/>
</dbReference>
<dbReference type="InterPro" id="IPR003758">
    <property type="entry name" value="LpxK"/>
</dbReference>
<dbReference type="InterPro" id="IPR027417">
    <property type="entry name" value="P-loop_NTPase"/>
</dbReference>
<dbReference type="NCBIfam" id="TIGR00682">
    <property type="entry name" value="lpxK"/>
    <property type="match status" value="1"/>
</dbReference>
<dbReference type="PANTHER" id="PTHR42724">
    <property type="entry name" value="TETRAACYLDISACCHARIDE 4'-KINASE"/>
    <property type="match status" value="1"/>
</dbReference>
<dbReference type="PANTHER" id="PTHR42724:SF1">
    <property type="entry name" value="TETRAACYLDISACCHARIDE 4'-KINASE, MITOCHONDRIAL-RELATED"/>
    <property type="match status" value="1"/>
</dbReference>
<dbReference type="Pfam" id="PF02606">
    <property type="entry name" value="LpxK"/>
    <property type="match status" value="1"/>
</dbReference>
<dbReference type="SUPFAM" id="SSF52540">
    <property type="entry name" value="P-loop containing nucleoside triphosphate hydrolases"/>
    <property type="match status" value="1"/>
</dbReference>
<organism>
    <name type="scientific">Porphyromonas gingivalis (strain ATCC BAA-308 / W83)</name>
    <dbReference type="NCBI Taxonomy" id="242619"/>
    <lineage>
        <taxon>Bacteria</taxon>
        <taxon>Pseudomonadati</taxon>
        <taxon>Bacteroidota</taxon>
        <taxon>Bacteroidia</taxon>
        <taxon>Bacteroidales</taxon>
        <taxon>Porphyromonadaceae</taxon>
        <taxon>Porphyromonas</taxon>
    </lineage>
</organism>